<gene>
    <name type="primary">CYCD5-1</name>
    <name type="ordered locus">At4g37630</name>
    <name type="ORF">F19F18.120</name>
</gene>
<protein>
    <recommendedName>
        <fullName>Cyclin-D5-1</fullName>
    </recommendedName>
    <alternativeName>
        <fullName>G1/S-specific cyclin-D5-1</fullName>
        <shortName>CycD5;1</shortName>
    </alternativeName>
</protein>
<reference key="1">
    <citation type="journal article" date="1999" name="Nature">
        <title>Sequence and analysis of chromosome 4 of the plant Arabidopsis thaliana.</title>
        <authorList>
            <person name="Mayer K.F.X."/>
            <person name="Schueller C."/>
            <person name="Wambutt R."/>
            <person name="Murphy G."/>
            <person name="Volckaert G."/>
            <person name="Pohl T."/>
            <person name="Duesterhoeft A."/>
            <person name="Stiekema W."/>
            <person name="Entian K.-D."/>
            <person name="Terryn N."/>
            <person name="Harris B."/>
            <person name="Ansorge W."/>
            <person name="Brandt P."/>
            <person name="Grivell L.A."/>
            <person name="Rieger M."/>
            <person name="Weichselgartner M."/>
            <person name="de Simone V."/>
            <person name="Obermaier B."/>
            <person name="Mache R."/>
            <person name="Mueller M."/>
            <person name="Kreis M."/>
            <person name="Delseny M."/>
            <person name="Puigdomenech P."/>
            <person name="Watson M."/>
            <person name="Schmidtheini T."/>
            <person name="Reichert B."/>
            <person name="Portetelle D."/>
            <person name="Perez-Alonso M."/>
            <person name="Boutry M."/>
            <person name="Bancroft I."/>
            <person name="Vos P."/>
            <person name="Hoheisel J."/>
            <person name="Zimmermann W."/>
            <person name="Wedler H."/>
            <person name="Ridley P."/>
            <person name="Langham S.-A."/>
            <person name="McCullagh B."/>
            <person name="Bilham L."/>
            <person name="Robben J."/>
            <person name="van der Schueren J."/>
            <person name="Grymonprez B."/>
            <person name="Chuang Y.-J."/>
            <person name="Vandenbussche F."/>
            <person name="Braeken M."/>
            <person name="Weltjens I."/>
            <person name="Voet M."/>
            <person name="Bastiaens I."/>
            <person name="Aert R."/>
            <person name="Defoor E."/>
            <person name="Weitzenegger T."/>
            <person name="Bothe G."/>
            <person name="Ramsperger U."/>
            <person name="Hilbert H."/>
            <person name="Braun M."/>
            <person name="Holzer E."/>
            <person name="Brandt A."/>
            <person name="Peters S."/>
            <person name="van Staveren M."/>
            <person name="Dirkse W."/>
            <person name="Mooijman P."/>
            <person name="Klein Lankhorst R."/>
            <person name="Rose M."/>
            <person name="Hauf J."/>
            <person name="Koetter P."/>
            <person name="Berneiser S."/>
            <person name="Hempel S."/>
            <person name="Feldpausch M."/>
            <person name="Lamberth S."/>
            <person name="Van den Daele H."/>
            <person name="De Keyser A."/>
            <person name="Buysshaert C."/>
            <person name="Gielen J."/>
            <person name="Villarroel R."/>
            <person name="De Clercq R."/>
            <person name="van Montagu M."/>
            <person name="Rogers J."/>
            <person name="Cronin A."/>
            <person name="Quail M.A."/>
            <person name="Bray-Allen S."/>
            <person name="Clark L."/>
            <person name="Doggett J."/>
            <person name="Hall S."/>
            <person name="Kay M."/>
            <person name="Lennard N."/>
            <person name="McLay K."/>
            <person name="Mayes R."/>
            <person name="Pettett A."/>
            <person name="Rajandream M.A."/>
            <person name="Lyne M."/>
            <person name="Benes V."/>
            <person name="Rechmann S."/>
            <person name="Borkova D."/>
            <person name="Bloecker H."/>
            <person name="Scharfe M."/>
            <person name="Grimm M."/>
            <person name="Loehnert T.-H."/>
            <person name="Dose S."/>
            <person name="de Haan M."/>
            <person name="Maarse A.C."/>
            <person name="Schaefer M."/>
            <person name="Mueller-Auer S."/>
            <person name="Gabel C."/>
            <person name="Fuchs M."/>
            <person name="Fartmann B."/>
            <person name="Granderath K."/>
            <person name="Dauner D."/>
            <person name="Herzl A."/>
            <person name="Neumann S."/>
            <person name="Argiriou A."/>
            <person name="Vitale D."/>
            <person name="Liguori R."/>
            <person name="Piravandi E."/>
            <person name="Massenet O."/>
            <person name="Quigley F."/>
            <person name="Clabauld G."/>
            <person name="Muendlein A."/>
            <person name="Felber R."/>
            <person name="Schnabl S."/>
            <person name="Hiller R."/>
            <person name="Schmidt W."/>
            <person name="Lecharny A."/>
            <person name="Aubourg S."/>
            <person name="Chefdor F."/>
            <person name="Cooke R."/>
            <person name="Berger C."/>
            <person name="Monfort A."/>
            <person name="Casacuberta E."/>
            <person name="Gibbons T."/>
            <person name="Weber N."/>
            <person name="Vandenbol M."/>
            <person name="Bargues M."/>
            <person name="Terol J."/>
            <person name="Torres A."/>
            <person name="Perez-Perez A."/>
            <person name="Purnelle B."/>
            <person name="Bent E."/>
            <person name="Johnson S."/>
            <person name="Tacon D."/>
            <person name="Jesse T."/>
            <person name="Heijnen L."/>
            <person name="Schwarz S."/>
            <person name="Scholler P."/>
            <person name="Heber S."/>
            <person name="Francs P."/>
            <person name="Bielke C."/>
            <person name="Frishman D."/>
            <person name="Haase D."/>
            <person name="Lemcke K."/>
            <person name="Mewes H.-W."/>
            <person name="Stocker S."/>
            <person name="Zaccaria P."/>
            <person name="Bevan M."/>
            <person name="Wilson R.K."/>
            <person name="de la Bastide M."/>
            <person name="Habermann K."/>
            <person name="Parnell L."/>
            <person name="Dedhia N."/>
            <person name="Gnoj L."/>
            <person name="Schutz K."/>
            <person name="Huang E."/>
            <person name="Spiegel L."/>
            <person name="Sekhon M."/>
            <person name="Murray J."/>
            <person name="Sheet P."/>
            <person name="Cordes M."/>
            <person name="Abu-Threideh J."/>
            <person name="Stoneking T."/>
            <person name="Kalicki J."/>
            <person name="Graves T."/>
            <person name="Harmon G."/>
            <person name="Edwards J."/>
            <person name="Latreille P."/>
            <person name="Courtney L."/>
            <person name="Cloud J."/>
            <person name="Abbott A."/>
            <person name="Scott K."/>
            <person name="Johnson D."/>
            <person name="Minx P."/>
            <person name="Bentley D."/>
            <person name="Fulton B."/>
            <person name="Miller N."/>
            <person name="Greco T."/>
            <person name="Kemp K."/>
            <person name="Kramer J."/>
            <person name="Fulton L."/>
            <person name="Mardis E."/>
            <person name="Dante M."/>
            <person name="Pepin K."/>
            <person name="Hillier L.W."/>
            <person name="Nelson J."/>
            <person name="Spieth J."/>
            <person name="Ryan E."/>
            <person name="Andrews S."/>
            <person name="Geisel C."/>
            <person name="Layman D."/>
            <person name="Du H."/>
            <person name="Ali J."/>
            <person name="Berghoff A."/>
            <person name="Jones K."/>
            <person name="Drone K."/>
            <person name="Cotton M."/>
            <person name="Joshu C."/>
            <person name="Antonoiu B."/>
            <person name="Zidanic M."/>
            <person name="Strong C."/>
            <person name="Sun H."/>
            <person name="Lamar B."/>
            <person name="Yordan C."/>
            <person name="Ma P."/>
            <person name="Zhong J."/>
            <person name="Preston R."/>
            <person name="Vil D."/>
            <person name="Shekher M."/>
            <person name="Matero A."/>
            <person name="Shah R."/>
            <person name="Swaby I.K."/>
            <person name="O'Shaughnessy A."/>
            <person name="Rodriguez M."/>
            <person name="Hoffman J."/>
            <person name="Till S."/>
            <person name="Granat S."/>
            <person name="Shohdy N."/>
            <person name="Hasegawa A."/>
            <person name="Hameed A."/>
            <person name="Lodhi M."/>
            <person name="Johnson A."/>
            <person name="Chen E."/>
            <person name="Marra M.A."/>
            <person name="Martienssen R."/>
            <person name="McCombie W.R."/>
        </authorList>
    </citation>
    <scope>NUCLEOTIDE SEQUENCE [LARGE SCALE GENOMIC DNA]</scope>
    <source>
        <strain>cv. Columbia</strain>
    </source>
</reference>
<reference key="2">
    <citation type="journal article" date="2017" name="Plant J.">
        <title>Araport11: a complete reannotation of the Arabidopsis thaliana reference genome.</title>
        <authorList>
            <person name="Cheng C.Y."/>
            <person name="Krishnakumar V."/>
            <person name="Chan A.P."/>
            <person name="Thibaud-Nissen F."/>
            <person name="Schobel S."/>
            <person name="Town C.D."/>
        </authorList>
    </citation>
    <scope>GENOME REANNOTATION</scope>
    <source>
        <strain>cv. Columbia</strain>
    </source>
</reference>
<reference key="3">
    <citation type="submission" date="2004-03" db="EMBL/GenBank/DDBJ databases">
        <authorList>
            <person name="Cheuk R.F."/>
            <person name="Chen H."/>
            <person name="Kim C.J."/>
            <person name="Shinn P."/>
            <person name="Carninci P."/>
            <person name="Hayashizaki Y."/>
            <person name="Ishida J."/>
            <person name="Kamiya A."/>
            <person name="Kawai J."/>
            <person name="Narusaka M."/>
            <person name="Sakurai T."/>
            <person name="Satou M."/>
            <person name="Seki M."/>
            <person name="Shinozaki K."/>
            <person name="Ecker J.R."/>
        </authorList>
    </citation>
    <scope>NUCLEOTIDE SEQUENCE [LARGE SCALE MRNA] (ISOFORM 1)</scope>
    <source>
        <strain>cv. Columbia</strain>
    </source>
</reference>
<reference key="4">
    <citation type="submission" date="2005-03" db="EMBL/GenBank/DDBJ databases">
        <title>Large-scale analysis of RIKEN Arabidopsis full-length (RAFL) cDNAs.</title>
        <authorList>
            <person name="Totoki Y."/>
            <person name="Seki M."/>
            <person name="Ishida J."/>
            <person name="Nakajima M."/>
            <person name="Enju A."/>
            <person name="Kamiya A."/>
            <person name="Narusaka M."/>
            <person name="Shin-i T."/>
            <person name="Nakagawa M."/>
            <person name="Sakamoto N."/>
            <person name="Oishi K."/>
            <person name="Kohara Y."/>
            <person name="Kobayashi M."/>
            <person name="Toyoda A."/>
            <person name="Sakaki Y."/>
            <person name="Sakurai T."/>
            <person name="Iida K."/>
            <person name="Akiyama K."/>
            <person name="Satou M."/>
            <person name="Toyoda T."/>
            <person name="Konagaya A."/>
            <person name="Carninci P."/>
            <person name="Kawai J."/>
            <person name="Hayashizaki Y."/>
            <person name="Shinozaki K."/>
        </authorList>
    </citation>
    <scope>NUCLEOTIDE SEQUENCE [LARGE SCALE MRNA] (ISOFORM 1)</scope>
    <source>
        <strain>cv. Columbia</strain>
    </source>
</reference>
<reference key="5">
    <citation type="journal article" date="2004" name="Plant Physiol.">
        <title>Genome-wide analysis of the cyclin family in Arabidopsis and comparative phylogenetic analysis of plant cyclin-like proteins.</title>
        <authorList>
            <person name="Wang G."/>
            <person name="Kong H."/>
            <person name="Sun Y."/>
            <person name="Zhang X."/>
            <person name="Zhang W."/>
            <person name="Altman N."/>
            <person name="dePamphilis C.W."/>
            <person name="Ma H."/>
        </authorList>
    </citation>
    <scope>GENE FAMILY</scope>
    <scope>NOMENCLATURE</scope>
</reference>
<name>CCD51_ARATH</name>
<organism>
    <name type="scientific">Arabidopsis thaliana</name>
    <name type="common">Mouse-ear cress</name>
    <dbReference type="NCBI Taxonomy" id="3702"/>
    <lineage>
        <taxon>Eukaryota</taxon>
        <taxon>Viridiplantae</taxon>
        <taxon>Streptophyta</taxon>
        <taxon>Embryophyta</taxon>
        <taxon>Tracheophyta</taxon>
        <taxon>Spermatophyta</taxon>
        <taxon>Magnoliopsida</taxon>
        <taxon>eudicotyledons</taxon>
        <taxon>Gunneridae</taxon>
        <taxon>Pentapetalae</taxon>
        <taxon>rosids</taxon>
        <taxon>malvids</taxon>
        <taxon>Brassicales</taxon>
        <taxon>Brassicaceae</taxon>
        <taxon>Camelineae</taxon>
        <taxon>Arabidopsis</taxon>
    </lineage>
</organism>
<accession>Q2V3B2</accession>
<accession>Q6NMC8</accession>
<accession>Q9SZF6</accession>
<comment type="alternative products">
    <event type="alternative splicing"/>
    <isoform>
        <id>Q2V3B2-1</id>
        <name>1</name>
        <sequence type="displayed"/>
    </isoform>
    <isoform>
        <id>Q2V3B2-2</id>
        <name>2</name>
        <sequence type="described" ref="VSP_025285"/>
    </isoform>
</comment>
<comment type="similarity">
    <text evidence="2">Belongs to the cyclin family. Cyclin D subfamily.</text>
</comment>
<comment type="sequence caution" evidence="2">
    <conflict type="erroneous gene model prediction">
        <sequence resource="EMBL-CDS" id="CAB38302"/>
    </conflict>
</comment>
<comment type="sequence caution" evidence="2">
    <conflict type="erroneous gene model prediction">
        <sequence resource="EMBL-CDS" id="CAB80428"/>
    </conflict>
</comment>
<keyword id="KW-0025">Alternative splicing</keyword>
<keyword id="KW-0131">Cell cycle</keyword>
<keyword id="KW-0132">Cell division</keyword>
<keyword id="KW-0195">Cyclin</keyword>
<keyword id="KW-1185">Reference proteome</keyword>
<proteinExistence type="evidence at transcript level"/>
<dbReference type="EMBL" id="AL035605">
    <property type="protein sequence ID" value="CAB38302.1"/>
    <property type="status" value="ALT_SEQ"/>
    <property type="molecule type" value="Genomic_DNA"/>
</dbReference>
<dbReference type="EMBL" id="AL161591">
    <property type="protein sequence ID" value="CAB80428.1"/>
    <property type="status" value="ALT_SEQ"/>
    <property type="molecule type" value="Genomic_DNA"/>
</dbReference>
<dbReference type="EMBL" id="CP002687">
    <property type="protein sequence ID" value="AEE86817.1"/>
    <property type="molecule type" value="Genomic_DNA"/>
</dbReference>
<dbReference type="EMBL" id="BT011732">
    <property type="protein sequence ID" value="AAS49095.1"/>
    <property type="molecule type" value="mRNA"/>
</dbReference>
<dbReference type="EMBL" id="AK221431">
    <property type="protein sequence ID" value="BAD94450.1"/>
    <property type="molecule type" value="mRNA"/>
</dbReference>
<dbReference type="PIR" id="T04720">
    <property type="entry name" value="T04720"/>
</dbReference>
<dbReference type="RefSeq" id="NP_195478.2">
    <molecule id="Q2V3B2-1"/>
    <property type="nucleotide sequence ID" value="NM_119926.5"/>
</dbReference>
<dbReference type="SMR" id="Q2V3B2"/>
<dbReference type="BioGRID" id="15198">
    <property type="interactions" value="32"/>
</dbReference>
<dbReference type="FunCoup" id="Q2V3B2">
    <property type="interactions" value="839"/>
</dbReference>
<dbReference type="IntAct" id="Q2V3B2">
    <property type="interactions" value="9"/>
</dbReference>
<dbReference type="STRING" id="3702.Q2V3B2"/>
<dbReference type="iPTMnet" id="Q2V3B2"/>
<dbReference type="PaxDb" id="3702-AT4G37630.1"/>
<dbReference type="ProteomicsDB" id="224463">
    <molecule id="Q2V3B2-1"/>
</dbReference>
<dbReference type="DNASU" id="829917"/>
<dbReference type="EnsemblPlants" id="AT4G37630.1">
    <molecule id="Q2V3B2-1"/>
    <property type="protein sequence ID" value="AT4G37630.1"/>
    <property type="gene ID" value="AT4G37630"/>
</dbReference>
<dbReference type="GeneID" id="829917"/>
<dbReference type="Gramene" id="AT4G37630.1">
    <molecule id="Q2V3B2-1"/>
    <property type="protein sequence ID" value="AT4G37630.1"/>
    <property type="gene ID" value="AT4G37630"/>
</dbReference>
<dbReference type="KEGG" id="ath:AT4G37630"/>
<dbReference type="Araport" id="AT4G37630"/>
<dbReference type="TAIR" id="AT4G37630">
    <property type="gene designation" value="CYCD5"/>
</dbReference>
<dbReference type="eggNOG" id="KOG0656">
    <property type="taxonomic scope" value="Eukaryota"/>
</dbReference>
<dbReference type="InParanoid" id="Q2V3B2"/>
<dbReference type="OMA" id="HKSWLEC"/>
<dbReference type="OrthoDB" id="306099at2759"/>
<dbReference type="PhylomeDB" id="Q2V3B2"/>
<dbReference type="PRO" id="PR:Q2V3B2"/>
<dbReference type="Proteomes" id="UP000006548">
    <property type="component" value="Chromosome 4"/>
</dbReference>
<dbReference type="ExpressionAtlas" id="Q2V3B2">
    <property type="expression patterns" value="baseline and differential"/>
</dbReference>
<dbReference type="GO" id="GO:0005634">
    <property type="term" value="C:nucleus"/>
    <property type="evidence" value="ECO:0000314"/>
    <property type="project" value="TAIR"/>
</dbReference>
<dbReference type="GO" id="GO:0051301">
    <property type="term" value="P:cell division"/>
    <property type="evidence" value="ECO:0007669"/>
    <property type="project" value="UniProtKB-KW"/>
</dbReference>
<dbReference type="GO" id="GO:0042023">
    <property type="term" value="P:DNA endoreduplication"/>
    <property type="evidence" value="ECO:0000315"/>
    <property type="project" value="TAIR"/>
</dbReference>
<dbReference type="CDD" id="cd20543">
    <property type="entry name" value="CYCLIN_AtCycD-like_rpt1"/>
    <property type="match status" value="1"/>
</dbReference>
<dbReference type="CDD" id="cd20544">
    <property type="entry name" value="CYCLIN_AtCycD-like_rpt2"/>
    <property type="match status" value="1"/>
</dbReference>
<dbReference type="FunFam" id="1.10.472.10:FF:000069">
    <property type="entry name" value="Cyclin-D5-1"/>
    <property type="match status" value="1"/>
</dbReference>
<dbReference type="FunFam" id="1.10.472.10:FF:000374">
    <property type="entry name" value="Cyclin-D5-1"/>
    <property type="match status" value="1"/>
</dbReference>
<dbReference type="Gene3D" id="1.10.472.10">
    <property type="entry name" value="Cyclin-like"/>
    <property type="match status" value="2"/>
</dbReference>
<dbReference type="InterPro" id="IPR039361">
    <property type="entry name" value="Cyclin"/>
</dbReference>
<dbReference type="InterPro" id="IPR013763">
    <property type="entry name" value="Cyclin-like_dom"/>
</dbReference>
<dbReference type="InterPro" id="IPR036915">
    <property type="entry name" value="Cyclin-like_sf"/>
</dbReference>
<dbReference type="InterPro" id="IPR006671">
    <property type="entry name" value="Cyclin_N"/>
</dbReference>
<dbReference type="PANTHER" id="PTHR10177">
    <property type="entry name" value="CYCLINS"/>
    <property type="match status" value="1"/>
</dbReference>
<dbReference type="Pfam" id="PF00134">
    <property type="entry name" value="Cyclin_N"/>
    <property type="match status" value="1"/>
</dbReference>
<dbReference type="SMART" id="SM00385">
    <property type="entry name" value="CYCLIN"/>
    <property type="match status" value="1"/>
</dbReference>
<dbReference type="SUPFAM" id="SSF47954">
    <property type="entry name" value="Cyclin-like"/>
    <property type="match status" value="1"/>
</dbReference>
<sequence>MGEPKDSLALFLCHESESSLNEDDDETIERSDKQEPHFTTTIDDEDYVADLVLKENLRFETLPSKTTSSSDRLIAIDWILTTRTRFGFQHQTAYIAISYFDLFLHKRFIGLQKDETWAMRLLSVACLSLAAKMEERIVPGLSQYPQDHDFVFKPDVIRKTELLILSTLDWKMNLITPFHYFNYFLAKISQDNHSVSKDLVLLRSSDSLLALTKEISFTEYRQFVVAAVTTLLASSSTSSDIRLTREEIANKFGSISWWTSNENENVYLCYQRTLEIEERKHMTPPPEIAVSREPPASGSGAKRRLSFDDSDQSSPPAKRMRRL</sequence>
<evidence type="ECO:0000256" key="1">
    <source>
        <dbReference type="SAM" id="MobiDB-lite"/>
    </source>
</evidence>
<evidence type="ECO:0000305" key="2"/>
<feature type="chain" id="PRO_0000287033" description="Cyclin-D5-1">
    <location>
        <begin position="1"/>
        <end position="323"/>
    </location>
</feature>
<feature type="region of interest" description="Disordered" evidence="1">
    <location>
        <begin position="17"/>
        <end position="36"/>
    </location>
</feature>
<feature type="region of interest" description="Disordered" evidence="1">
    <location>
        <begin position="281"/>
        <end position="323"/>
    </location>
</feature>
<feature type="splice variant" id="VSP_025285" description="In isoform 2." evidence="2">
    <location>
        <begin position="111"/>
        <end position="112"/>
    </location>
</feature>